<organism>
    <name type="scientific">Shewanella halifaxensis (strain HAW-EB4)</name>
    <dbReference type="NCBI Taxonomy" id="458817"/>
    <lineage>
        <taxon>Bacteria</taxon>
        <taxon>Pseudomonadati</taxon>
        <taxon>Pseudomonadota</taxon>
        <taxon>Gammaproteobacteria</taxon>
        <taxon>Alteromonadales</taxon>
        <taxon>Shewanellaceae</taxon>
        <taxon>Shewanella</taxon>
    </lineage>
</organism>
<reference key="1">
    <citation type="submission" date="2008-01" db="EMBL/GenBank/DDBJ databases">
        <title>Complete sequence of Shewanella halifaxensis HAW-EB4.</title>
        <authorList>
            <consortium name="US DOE Joint Genome Institute"/>
            <person name="Copeland A."/>
            <person name="Lucas S."/>
            <person name="Lapidus A."/>
            <person name="Glavina del Rio T."/>
            <person name="Dalin E."/>
            <person name="Tice H."/>
            <person name="Bruce D."/>
            <person name="Goodwin L."/>
            <person name="Pitluck S."/>
            <person name="Sims D."/>
            <person name="Brettin T."/>
            <person name="Detter J.C."/>
            <person name="Han C."/>
            <person name="Kuske C.R."/>
            <person name="Schmutz J."/>
            <person name="Larimer F."/>
            <person name="Land M."/>
            <person name="Hauser L."/>
            <person name="Kyrpides N."/>
            <person name="Kim E."/>
            <person name="Zhao J.-S."/>
            <person name="Richardson P."/>
        </authorList>
    </citation>
    <scope>NUCLEOTIDE SEQUENCE [LARGE SCALE GENOMIC DNA]</scope>
    <source>
        <strain>HAW-EB4</strain>
    </source>
</reference>
<dbReference type="EMBL" id="CP000931">
    <property type="protein sequence ID" value="ABZ75800.1"/>
    <property type="molecule type" value="Genomic_DNA"/>
</dbReference>
<dbReference type="RefSeq" id="WP_012276342.1">
    <property type="nucleotide sequence ID" value="NC_010334.1"/>
</dbReference>
<dbReference type="SMR" id="B0TK13"/>
<dbReference type="STRING" id="458817.Shal_1231"/>
<dbReference type="KEGG" id="shl:Shal_1231"/>
<dbReference type="eggNOG" id="COG0249">
    <property type="taxonomic scope" value="Bacteria"/>
</dbReference>
<dbReference type="HOGENOM" id="CLU_002472_4_0_6"/>
<dbReference type="OrthoDB" id="9802448at2"/>
<dbReference type="Proteomes" id="UP000001317">
    <property type="component" value="Chromosome"/>
</dbReference>
<dbReference type="GO" id="GO:0005829">
    <property type="term" value="C:cytosol"/>
    <property type="evidence" value="ECO:0007669"/>
    <property type="project" value="TreeGrafter"/>
</dbReference>
<dbReference type="GO" id="GO:0005524">
    <property type="term" value="F:ATP binding"/>
    <property type="evidence" value="ECO:0007669"/>
    <property type="project" value="UniProtKB-UniRule"/>
</dbReference>
<dbReference type="GO" id="GO:0140664">
    <property type="term" value="F:ATP-dependent DNA damage sensor activity"/>
    <property type="evidence" value="ECO:0007669"/>
    <property type="project" value="InterPro"/>
</dbReference>
<dbReference type="GO" id="GO:0003684">
    <property type="term" value="F:damaged DNA binding"/>
    <property type="evidence" value="ECO:0007669"/>
    <property type="project" value="UniProtKB-UniRule"/>
</dbReference>
<dbReference type="GO" id="GO:0030983">
    <property type="term" value="F:mismatched DNA binding"/>
    <property type="evidence" value="ECO:0007669"/>
    <property type="project" value="InterPro"/>
</dbReference>
<dbReference type="GO" id="GO:0006298">
    <property type="term" value="P:mismatch repair"/>
    <property type="evidence" value="ECO:0007669"/>
    <property type="project" value="UniProtKB-UniRule"/>
</dbReference>
<dbReference type="CDD" id="cd03284">
    <property type="entry name" value="ABC_MutS1"/>
    <property type="match status" value="1"/>
</dbReference>
<dbReference type="FunFam" id="1.10.1420.10:FF:000002">
    <property type="entry name" value="DNA mismatch repair protein MutS"/>
    <property type="match status" value="1"/>
</dbReference>
<dbReference type="FunFam" id="3.30.420.110:FF:000001">
    <property type="entry name" value="DNA mismatch repair protein MutS"/>
    <property type="match status" value="1"/>
</dbReference>
<dbReference type="FunFam" id="3.40.1170.10:FF:000001">
    <property type="entry name" value="DNA mismatch repair protein MutS"/>
    <property type="match status" value="1"/>
</dbReference>
<dbReference type="FunFam" id="3.40.50.300:FF:000283">
    <property type="entry name" value="DNA mismatch repair protein MutS"/>
    <property type="match status" value="1"/>
</dbReference>
<dbReference type="Gene3D" id="1.10.1420.10">
    <property type="match status" value="2"/>
</dbReference>
<dbReference type="Gene3D" id="6.10.140.430">
    <property type="match status" value="1"/>
</dbReference>
<dbReference type="Gene3D" id="3.40.1170.10">
    <property type="entry name" value="DNA repair protein MutS, domain I"/>
    <property type="match status" value="1"/>
</dbReference>
<dbReference type="Gene3D" id="3.30.420.110">
    <property type="entry name" value="MutS, connector domain"/>
    <property type="match status" value="1"/>
</dbReference>
<dbReference type="Gene3D" id="3.40.50.300">
    <property type="entry name" value="P-loop containing nucleotide triphosphate hydrolases"/>
    <property type="match status" value="1"/>
</dbReference>
<dbReference type="HAMAP" id="MF_00096">
    <property type="entry name" value="MutS"/>
    <property type="match status" value="1"/>
</dbReference>
<dbReference type="InterPro" id="IPR005748">
    <property type="entry name" value="DNA_mismatch_repair_MutS"/>
</dbReference>
<dbReference type="InterPro" id="IPR007695">
    <property type="entry name" value="DNA_mismatch_repair_MutS-lik_N"/>
</dbReference>
<dbReference type="InterPro" id="IPR017261">
    <property type="entry name" value="DNA_mismatch_repair_MutS/MSH"/>
</dbReference>
<dbReference type="InterPro" id="IPR000432">
    <property type="entry name" value="DNA_mismatch_repair_MutS_C"/>
</dbReference>
<dbReference type="InterPro" id="IPR007861">
    <property type="entry name" value="DNA_mismatch_repair_MutS_clamp"/>
</dbReference>
<dbReference type="InterPro" id="IPR007696">
    <property type="entry name" value="DNA_mismatch_repair_MutS_core"/>
</dbReference>
<dbReference type="InterPro" id="IPR016151">
    <property type="entry name" value="DNA_mismatch_repair_MutS_N"/>
</dbReference>
<dbReference type="InterPro" id="IPR036187">
    <property type="entry name" value="DNA_mismatch_repair_MutS_sf"/>
</dbReference>
<dbReference type="InterPro" id="IPR007860">
    <property type="entry name" value="DNA_mmatch_repair_MutS_con_dom"/>
</dbReference>
<dbReference type="InterPro" id="IPR045076">
    <property type="entry name" value="MutS"/>
</dbReference>
<dbReference type="InterPro" id="IPR036678">
    <property type="entry name" value="MutS_con_dom_sf"/>
</dbReference>
<dbReference type="InterPro" id="IPR027417">
    <property type="entry name" value="P-loop_NTPase"/>
</dbReference>
<dbReference type="NCBIfam" id="TIGR01070">
    <property type="entry name" value="mutS1"/>
    <property type="match status" value="1"/>
</dbReference>
<dbReference type="NCBIfam" id="NF003810">
    <property type="entry name" value="PRK05399.1"/>
    <property type="match status" value="1"/>
</dbReference>
<dbReference type="PANTHER" id="PTHR11361:SF34">
    <property type="entry name" value="DNA MISMATCH REPAIR PROTEIN MSH1, MITOCHONDRIAL"/>
    <property type="match status" value="1"/>
</dbReference>
<dbReference type="PANTHER" id="PTHR11361">
    <property type="entry name" value="DNA MISMATCH REPAIR PROTEIN MUTS FAMILY MEMBER"/>
    <property type="match status" value="1"/>
</dbReference>
<dbReference type="Pfam" id="PF01624">
    <property type="entry name" value="MutS_I"/>
    <property type="match status" value="1"/>
</dbReference>
<dbReference type="Pfam" id="PF05188">
    <property type="entry name" value="MutS_II"/>
    <property type="match status" value="1"/>
</dbReference>
<dbReference type="Pfam" id="PF05192">
    <property type="entry name" value="MutS_III"/>
    <property type="match status" value="1"/>
</dbReference>
<dbReference type="Pfam" id="PF05190">
    <property type="entry name" value="MutS_IV"/>
    <property type="match status" value="1"/>
</dbReference>
<dbReference type="Pfam" id="PF00488">
    <property type="entry name" value="MutS_V"/>
    <property type="match status" value="1"/>
</dbReference>
<dbReference type="PIRSF" id="PIRSF037677">
    <property type="entry name" value="DNA_mis_repair_Msh6"/>
    <property type="match status" value="1"/>
</dbReference>
<dbReference type="SMART" id="SM00534">
    <property type="entry name" value="MUTSac"/>
    <property type="match status" value="1"/>
</dbReference>
<dbReference type="SMART" id="SM00533">
    <property type="entry name" value="MUTSd"/>
    <property type="match status" value="1"/>
</dbReference>
<dbReference type="SUPFAM" id="SSF55271">
    <property type="entry name" value="DNA repair protein MutS, domain I"/>
    <property type="match status" value="1"/>
</dbReference>
<dbReference type="SUPFAM" id="SSF53150">
    <property type="entry name" value="DNA repair protein MutS, domain II"/>
    <property type="match status" value="1"/>
</dbReference>
<dbReference type="SUPFAM" id="SSF48334">
    <property type="entry name" value="DNA repair protein MutS, domain III"/>
    <property type="match status" value="1"/>
</dbReference>
<dbReference type="SUPFAM" id="SSF52540">
    <property type="entry name" value="P-loop containing nucleoside triphosphate hydrolases"/>
    <property type="match status" value="1"/>
</dbReference>
<dbReference type="PROSITE" id="PS00486">
    <property type="entry name" value="DNA_MISMATCH_REPAIR_2"/>
    <property type="match status" value="1"/>
</dbReference>
<gene>
    <name evidence="1" type="primary">mutS</name>
    <name type="ordered locus">Shal_1231</name>
</gene>
<proteinExistence type="inferred from homology"/>
<name>MUTS_SHEHH</name>
<accession>B0TK13</accession>
<protein>
    <recommendedName>
        <fullName evidence="1">DNA mismatch repair protein MutS</fullName>
    </recommendedName>
</protein>
<keyword id="KW-0067">ATP-binding</keyword>
<keyword id="KW-0227">DNA damage</keyword>
<keyword id="KW-0234">DNA repair</keyword>
<keyword id="KW-0238">DNA-binding</keyword>
<keyword id="KW-0547">Nucleotide-binding</keyword>
<sequence length="859" mass="95920">MTAIDPQGLEKHTPMMRQYLTLKAQHPDMLLFYRMGDFYELFYEDAKRASELLGISLTARGKSGGDPIPMAGLPYHAVEGYLAKLVQLRVSVAICEQIGDPATSKGPVERKVVRIVTPGTLTDEALLQERQDNLLAALYQGKTGYGYATLDVASGRFVITELANTEALEAELQRTNPAELLYSEDFSEMSLIAAINGTRRRPEWEFDYDTCHRLLLNQFGTKDLKGFGIEDARLSLQAAGCLMQYVKDTQRTALPHINSIVRFNQSDSIVLDAATRRNLELTVNLQGGRENTLASVLDNTVTPMGSRMLQRWLHQPLRDHDIIRARQVSIEELLGNANYEILSEDLKAIGDIERITTRIALRNARPRDFARLRQALALLPQLQQTLTQAAAPHLKYLSQVIGEFPDELELLSRAVVDNPPMLIRDGGVIREGYNEELDQWRKLSEGATDYLHELEAREKQQTGISTLKVGYNRVHGYYIEVSRRESDLVPLSYQRRQTLKNTERYIIPELKEHEEKVLSSQGRALALEKQLWEQLFDLILPKLHELQDFARASAELDVLCNFAERAESLNYHCPDLSTAPGIQIEAGRHPVVEQVSQSPFIANPVTLNNERKMLIVTGPNMGGKSTYMRQVALITLMAHIGCYVPAEHAVIGPVDRIFTRIGASDDLASGRSTFMVEMTETANILHNATPNSLVLMDEIGRGTSTYDGLSLAWSAAEYLAKHLQAMTLFATHYFELTQLPELLSNVENVHLDAVEHGDSIVFMHAVQEGAASRSYGLQVAALAGVPNCVISAAKHKLHQLESRDHGKESCDAQQPLQQSISFSAPTPSPALEALAKLNPDELTPRQALDYLYNLKKLAL</sequence>
<comment type="function">
    <text evidence="1">This protein is involved in the repair of mismatches in DNA. It is possible that it carries out the mismatch recognition step. This protein has a weak ATPase activity.</text>
</comment>
<comment type="similarity">
    <text evidence="1">Belongs to the DNA mismatch repair MutS family.</text>
</comment>
<evidence type="ECO:0000255" key="1">
    <source>
        <dbReference type="HAMAP-Rule" id="MF_00096"/>
    </source>
</evidence>
<feature type="chain" id="PRO_1000075561" description="DNA mismatch repair protein MutS">
    <location>
        <begin position="1"/>
        <end position="859"/>
    </location>
</feature>
<feature type="binding site" evidence="1">
    <location>
        <begin position="618"/>
        <end position="625"/>
    </location>
    <ligand>
        <name>ATP</name>
        <dbReference type="ChEBI" id="CHEBI:30616"/>
    </ligand>
</feature>